<proteinExistence type="inferred from homology"/>
<accession>A7HGZ2</accession>
<organism>
    <name type="scientific">Anaeromyxobacter sp. (strain Fw109-5)</name>
    <dbReference type="NCBI Taxonomy" id="404589"/>
    <lineage>
        <taxon>Bacteria</taxon>
        <taxon>Pseudomonadati</taxon>
        <taxon>Myxococcota</taxon>
        <taxon>Myxococcia</taxon>
        <taxon>Myxococcales</taxon>
        <taxon>Cystobacterineae</taxon>
        <taxon>Anaeromyxobacteraceae</taxon>
        <taxon>Anaeromyxobacter</taxon>
    </lineage>
</organism>
<protein>
    <recommendedName>
        <fullName evidence="1">3-methyl-2-oxobutanoate hydroxymethyltransferase</fullName>
        <ecNumber evidence="1">2.1.2.11</ecNumber>
    </recommendedName>
    <alternativeName>
        <fullName evidence="1">Ketopantoate hydroxymethyltransferase</fullName>
        <shortName evidence="1">KPHMT</shortName>
    </alternativeName>
</protein>
<gene>
    <name evidence="1" type="primary">panB</name>
    <name type="ordered locus">Anae109_3809</name>
</gene>
<dbReference type="EC" id="2.1.2.11" evidence="1"/>
<dbReference type="EMBL" id="CP000769">
    <property type="protein sequence ID" value="ABS27988.1"/>
    <property type="molecule type" value="Genomic_DNA"/>
</dbReference>
<dbReference type="RefSeq" id="WP_012098619.1">
    <property type="nucleotide sequence ID" value="NC_009675.1"/>
</dbReference>
<dbReference type="SMR" id="A7HGZ2"/>
<dbReference type="STRING" id="404589.Anae109_3809"/>
<dbReference type="KEGG" id="afw:Anae109_3809"/>
<dbReference type="eggNOG" id="COG0413">
    <property type="taxonomic scope" value="Bacteria"/>
</dbReference>
<dbReference type="HOGENOM" id="CLU_036645_1_0_7"/>
<dbReference type="OrthoDB" id="9781789at2"/>
<dbReference type="UniPathway" id="UPA00028">
    <property type="reaction ID" value="UER00003"/>
</dbReference>
<dbReference type="Proteomes" id="UP000006382">
    <property type="component" value="Chromosome"/>
</dbReference>
<dbReference type="GO" id="GO:0005737">
    <property type="term" value="C:cytoplasm"/>
    <property type="evidence" value="ECO:0007669"/>
    <property type="project" value="UniProtKB-SubCell"/>
</dbReference>
<dbReference type="GO" id="GO:0003864">
    <property type="term" value="F:3-methyl-2-oxobutanoate hydroxymethyltransferase activity"/>
    <property type="evidence" value="ECO:0007669"/>
    <property type="project" value="UniProtKB-UniRule"/>
</dbReference>
<dbReference type="GO" id="GO:0000287">
    <property type="term" value="F:magnesium ion binding"/>
    <property type="evidence" value="ECO:0007669"/>
    <property type="project" value="TreeGrafter"/>
</dbReference>
<dbReference type="GO" id="GO:0015940">
    <property type="term" value="P:pantothenate biosynthetic process"/>
    <property type="evidence" value="ECO:0007669"/>
    <property type="project" value="UniProtKB-UniRule"/>
</dbReference>
<dbReference type="CDD" id="cd06557">
    <property type="entry name" value="KPHMT-like"/>
    <property type="match status" value="1"/>
</dbReference>
<dbReference type="FunFam" id="3.20.20.60:FF:000003">
    <property type="entry name" value="3-methyl-2-oxobutanoate hydroxymethyltransferase"/>
    <property type="match status" value="1"/>
</dbReference>
<dbReference type="Gene3D" id="3.20.20.60">
    <property type="entry name" value="Phosphoenolpyruvate-binding domains"/>
    <property type="match status" value="1"/>
</dbReference>
<dbReference type="HAMAP" id="MF_00156">
    <property type="entry name" value="PanB"/>
    <property type="match status" value="1"/>
</dbReference>
<dbReference type="InterPro" id="IPR003700">
    <property type="entry name" value="Pantoate_hydroxy_MeTrfase"/>
</dbReference>
<dbReference type="InterPro" id="IPR015813">
    <property type="entry name" value="Pyrv/PenolPyrv_kinase-like_dom"/>
</dbReference>
<dbReference type="InterPro" id="IPR040442">
    <property type="entry name" value="Pyrv_kinase-like_dom_sf"/>
</dbReference>
<dbReference type="NCBIfam" id="TIGR00222">
    <property type="entry name" value="panB"/>
    <property type="match status" value="1"/>
</dbReference>
<dbReference type="NCBIfam" id="NF001452">
    <property type="entry name" value="PRK00311.1"/>
    <property type="match status" value="1"/>
</dbReference>
<dbReference type="PANTHER" id="PTHR20881">
    <property type="entry name" value="3-METHYL-2-OXOBUTANOATE HYDROXYMETHYLTRANSFERASE"/>
    <property type="match status" value="1"/>
</dbReference>
<dbReference type="PANTHER" id="PTHR20881:SF0">
    <property type="entry name" value="3-METHYL-2-OXOBUTANOATE HYDROXYMETHYLTRANSFERASE"/>
    <property type="match status" value="1"/>
</dbReference>
<dbReference type="Pfam" id="PF02548">
    <property type="entry name" value="Pantoate_transf"/>
    <property type="match status" value="1"/>
</dbReference>
<dbReference type="PIRSF" id="PIRSF000388">
    <property type="entry name" value="Pantoate_hydroxy_MeTrfase"/>
    <property type="match status" value="1"/>
</dbReference>
<dbReference type="SUPFAM" id="SSF51621">
    <property type="entry name" value="Phosphoenolpyruvate/pyruvate domain"/>
    <property type="match status" value="1"/>
</dbReference>
<name>PANB_ANADF</name>
<feature type="chain" id="PRO_1000011360" description="3-methyl-2-oxobutanoate hydroxymethyltransferase">
    <location>
        <begin position="1"/>
        <end position="305"/>
    </location>
</feature>
<feature type="active site" description="Proton acceptor" evidence="1">
    <location>
        <position position="194"/>
    </location>
</feature>
<feature type="binding site" evidence="1">
    <location>
        <begin position="52"/>
        <end position="53"/>
    </location>
    <ligand>
        <name>3-methyl-2-oxobutanoate</name>
        <dbReference type="ChEBI" id="CHEBI:11851"/>
    </ligand>
</feature>
<feature type="binding site" evidence="1">
    <location>
        <position position="52"/>
    </location>
    <ligand>
        <name>Mg(2+)</name>
        <dbReference type="ChEBI" id="CHEBI:18420"/>
    </ligand>
</feature>
<feature type="binding site" evidence="1">
    <location>
        <position position="95"/>
    </location>
    <ligand>
        <name>3-methyl-2-oxobutanoate</name>
        <dbReference type="ChEBI" id="CHEBI:11851"/>
    </ligand>
</feature>
<feature type="binding site" evidence="1">
    <location>
        <position position="95"/>
    </location>
    <ligand>
        <name>Mg(2+)</name>
        <dbReference type="ChEBI" id="CHEBI:18420"/>
    </ligand>
</feature>
<feature type="binding site" evidence="1">
    <location>
        <position position="125"/>
    </location>
    <ligand>
        <name>3-methyl-2-oxobutanoate</name>
        <dbReference type="ChEBI" id="CHEBI:11851"/>
    </ligand>
</feature>
<feature type="binding site" evidence="1">
    <location>
        <position position="127"/>
    </location>
    <ligand>
        <name>Mg(2+)</name>
        <dbReference type="ChEBI" id="CHEBI:18420"/>
    </ligand>
</feature>
<evidence type="ECO:0000255" key="1">
    <source>
        <dbReference type="HAMAP-Rule" id="MF_00156"/>
    </source>
</evidence>
<sequence>MSSQTAPRRRVTIHELRRMKDAGEKIAVVTAYDATAARLADAAGVDVVLVGDSLGMVVQGHESTLPVTLEHMIYHSAAVRRGLARSSGRAHLVGDMPFGSYQASADEAVKSAMRLVAEGGVESVKLEGGAEFVEVIRRIARAGVPVMGHIGLTPQAVHRMGGYVVQGKDSEKAQQLLRDARALELAGCYAIVLECIPAELARIISSQLRIPTIGIGAGLHCDGQVLVLNDLLGMDDAFTPKFVKRFGEIGQAISTAVGAYVGEVKRRVFPDDAHSFHSSTVRLVPAAPVDEDDGEPSGGVMGAPV</sequence>
<comment type="function">
    <text evidence="1">Catalyzes the reversible reaction in which hydroxymethyl group from 5,10-methylenetetrahydrofolate is transferred onto alpha-ketoisovalerate to form ketopantoate.</text>
</comment>
<comment type="catalytic activity">
    <reaction evidence="1">
        <text>3-methyl-2-oxobutanoate + (6R)-5,10-methylene-5,6,7,8-tetrahydrofolate + H2O = 2-dehydropantoate + (6S)-5,6,7,8-tetrahydrofolate</text>
        <dbReference type="Rhea" id="RHEA:11824"/>
        <dbReference type="ChEBI" id="CHEBI:11561"/>
        <dbReference type="ChEBI" id="CHEBI:11851"/>
        <dbReference type="ChEBI" id="CHEBI:15377"/>
        <dbReference type="ChEBI" id="CHEBI:15636"/>
        <dbReference type="ChEBI" id="CHEBI:57453"/>
        <dbReference type="EC" id="2.1.2.11"/>
    </reaction>
</comment>
<comment type="cofactor">
    <cofactor evidence="1">
        <name>Mg(2+)</name>
        <dbReference type="ChEBI" id="CHEBI:18420"/>
    </cofactor>
    <text evidence="1">Binds 1 Mg(2+) ion per subunit.</text>
</comment>
<comment type="pathway">
    <text evidence="1">Cofactor biosynthesis; (R)-pantothenate biosynthesis; (R)-pantoate from 3-methyl-2-oxobutanoate: step 1/2.</text>
</comment>
<comment type="subunit">
    <text evidence="1">Homodecamer; pentamer of dimers.</text>
</comment>
<comment type="subcellular location">
    <subcellularLocation>
        <location evidence="1">Cytoplasm</location>
    </subcellularLocation>
</comment>
<comment type="similarity">
    <text evidence="1">Belongs to the PanB family.</text>
</comment>
<reference key="1">
    <citation type="journal article" date="2015" name="Genome Announc.">
        <title>Complete genome sequence of Anaeromyxobacter sp. Fw109-5, an anaerobic, metal-reducing bacterium isolated from a contaminated subsurface environment.</title>
        <authorList>
            <person name="Hwang C."/>
            <person name="Copeland A."/>
            <person name="Lucas S."/>
            <person name="Lapidus A."/>
            <person name="Barry K."/>
            <person name="Glavina Del Rio T."/>
            <person name="Dalin E."/>
            <person name="Tice H."/>
            <person name="Pitluck S."/>
            <person name="Sims D."/>
            <person name="Brettin T."/>
            <person name="Bruce D.C."/>
            <person name="Detter J.C."/>
            <person name="Han C.S."/>
            <person name="Schmutz J."/>
            <person name="Larimer F.W."/>
            <person name="Land M.L."/>
            <person name="Hauser L.J."/>
            <person name="Kyrpides N."/>
            <person name="Lykidis A."/>
            <person name="Richardson P."/>
            <person name="Belieav A."/>
            <person name="Sanford R.A."/>
            <person name="Loeffler F.E."/>
            <person name="Fields M.W."/>
        </authorList>
    </citation>
    <scope>NUCLEOTIDE SEQUENCE [LARGE SCALE GENOMIC DNA]</scope>
    <source>
        <strain>Fw109-5</strain>
    </source>
</reference>
<keyword id="KW-0963">Cytoplasm</keyword>
<keyword id="KW-0460">Magnesium</keyword>
<keyword id="KW-0479">Metal-binding</keyword>
<keyword id="KW-0566">Pantothenate biosynthesis</keyword>
<keyword id="KW-1185">Reference proteome</keyword>
<keyword id="KW-0808">Transferase</keyword>